<reference key="1">
    <citation type="journal article" date="1994" name="Mol. Microbiol.">
        <title>Family of the major cold-shock protein, CspA (CS7.4), of Escherichia coli, whose members show a high sequence similarity with the eukaryotic Y-box binding proteins.</title>
        <authorList>
            <person name="Lee S.J."/>
            <person name="Xie A."/>
            <person name="Jiang W."/>
            <person name="Etchegaray J.-P."/>
            <person name="Jones P.G."/>
            <person name="Inouye M."/>
        </authorList>
    </citation>
    <scope>NUCLEOTIDE SEQUENCE [GENOMIC DNA]</scope>
    <source>
        <strain>TAP90 / ATCC 47037</strain>
    </source>
</reference>
<reference key="2">
    <citation type="journal article" date="1994" name="Mol. Microbiol.">
        <title>Cloning, sequencing, and characterization of multicopy suppressors of a mukB mutation in Escherichia coli.</title>
        <authorList>
            <person name="Yamanaka K."/>
            <person name="Mitani T."/>
            <person name="Ogura T."/>
            <person name="Niki H."/>
            <person name="Hiraga S."/>
        </authorList>
    </citation>
    <scope>NUCLEOTIDE SEQUENCE [GENOMIC DNA]</scope>
    <source>
        <strain>K12</strain>
    </source>
</reference>
<reference key="3">
    <citation type="journal article" date="1996" name="DNA Res.">
        <title>A 460-kb DNA sequence of the Escherichia coli K-12 genome corresponding to the 40.1-50.0 min region on the linkage map.</title>
        <authorList>
            <person name="Itoh T."/>
            <person name="Aiba H."/>
            <person name="Baba T."/>
            <person name="Fujita K."/>
            <person name="Hayashi K."/>
            <person name="Inada T."/>
            <person name="Isono K."/>
            <person name="Kasai H."/>
            <person name="Kimura S."/>
            <person name="Kitakawa M."/>
            <person name="Kitagawa M."/>
            <person name="Makino K."/>
            <person name="Miki T."/>
            <person name="Mizobuchi K."/>
            <person name="Mori H."/>
            <person name="Mori T."/>
            <person name="Motomura K."/>
            <person name="Nakade S."/>
            <person name="Nakamura Y."/>
            <person name="Nashimoto H."/>
            <person name="Nishio Y."/>
            <person name="Oshima T."/>
            <person name="Saito N."/>
            <person name="Sampei G."/>
            <person name="Seki Y."/>
            <person name="Sivasundaram S."/>
            <person name="Tagami H."/>
            <person name="Takeda J."/>
            <person name="Takemoto K."/>
            <person name="Wada C."/>
            <person name="Yamamoto Y."/>
            <person name="Horiuchi T."/>
        </authorList>
    </citation>
    <scope>NUCLEOTIDE SEQUENCE [LARGE SCALE GENOMIC DNA]</scope>
    <source>
        <strain>K12 / W3110 / ATCC 27325 / DSM 5911</strain>
    </source>
</reference>
<reference key="4">
    <citation type="journal article" date="1997" name="Science">
        <title>The complete genome sequence of Escherichia coli K-12.</title>
        <authorList>
            <person name="Blattner F.R."/>
            <person name="Plunkett G. III"/>
            <person name="Bloch C.A."/>
            <person name="Perna N.T."/>
            <person name="Burland V."/>
            <person name="Riley M."/>
            <person name="Collado-Vides J."/>
            <person name="Glasner J.D."/>
            <person name="Rode C.K."/>
            <person name="Mayhew G.F."/>
            <person name="Gregor J."/>
            <person name="Davis N.W."/>
            <person name="Kirkpatrick H.A."/>
            <person name="Goeden M.A."/>
            <person name="Rose D.J."/>
            <person name="Mau B."/>
            <person name="Shao Y."/>
        </authorList>
    </citation>
    <scope>NUCLEOTIDE SEQUENCE [LARGE SCALE GENOMIC DNA]</scope>
    <source>
        <strain>K12 / MG1655 / ATCC 47076</strain>
    </source>
</reference>
<reference key="5">
    <citation type="journal article" date="2006" name="Mol. Syst. Biol.">
        <title>Highly accurate genome sequences of Escherichia coli K-12 strains MG1655 and W3110.</title>
        <authorList>
            <person name="Hayashi K."/>
            <person name="Morooka N."/>
            <person name="Yamamoto Y."/>
            <person name="Fujita K."/>
            <person name="Isono K."/>
            <person name="Choi S."/>
            <person name="Ohtsubo E."/>
            <person name="Baba T."/>
            <person name="Wanner B.L."/>
            <person name="Mori H."/>
            <person name="Horiuchi T."/>
        </authorList>
    </citation>
    <scope>NUCLEOTIDE SEQUENCE [LARGE SCALE GENOMIC DNA]</scope>
    <source>
        <strain>K12 / W3110 / ATCC 27325 / DSM 5911</strain>
    </source>
</reference>
<reference key="6">
    <citation type="submission" date="1994-09" db="UniProtKB">
        <authorList>
            <person name="Pasquali C."/>
            <person name="Sanchez J.-C."/>
            <person name="Ravier F."/>
            <person name="Golaz O."/>
            <person name="Hughes G.J."/>
            <person name="Frutiger S."/>
            <person name="Paquet N."/>
            <person name="Wilkins M."/>
            <person name="Appel R.D."/>
            <person name="Bairoch A."/>
            <person name="Hochstrasser D.F."/>
        </authorList>
    </citation>
    <scope>PROTEIN SEQUENCE OF 2-13</scope>
    <source>
        <strain>K12 / W3110 / ATCC 27325 / DSM 5911</strain>
    </source>
</reference>
<reference key="7">
    <citation type="journal article" date="1997" name="Electrophoresis">
        <title>Comparing the predicted and observed properties of proteins encoded in the genome of Escherichia coli K-12.</title>
        <authorList>
            <person name="Link A.J."/>
            <person name="Robison K."/>
            <person name="Church G.M."/>
        </authorList>
    </citation>
    <scope>PROTEIN SEQUENCE OF 2-13</scope>
    <source>
        <strain>K12 / EMG2</strain>
    </source>
</reference>
<reference key="8">
    <citation type="journal article" date="1998" name="FEMS Microbiol. Lett.">
        <title>Small genes/gene-products in Escherichia coli K-12.</title>
        <authorList>
            <person name="Wasinger V.C."/>
            <person name="Humphery-Smith I."/>
        </authorList>
    </citation>
    <scope>PROTEIN SEQUENCE OF 2-11</scope>
    <source>
        <strain>K12</strain>
    </source>
</reference>
<reference key="9">
    <citation type="journal article" date="2002" name="J. Am. Chem. Soc.">
        <title>Gas-phase concentration, purification, and identification of whole proteins from complex mixtures.</title>
        <authorList>
            <person name="Reid G.E."/>
            <person name="Shang H."/>
            <person name="Hogan J.M."/>
            <person name="Lee G.U."/>
            <person name="McLuckey S.A."/>
        </authorList>
    </citation>
    <scope>MASS SPECTROMETRY</scope>
    <source>
        <strain>ATCC 15597</strain>
    </source>
</reference>
<evidence type="ECO:0000250" key="1"/>
<evidence type="ECO:0000269" key="2">
    <source>
    </source>
</evidence>
<evidence type="ECO:0000269" key="3">
    <source>
    </source>
</evidence>
<evidence type="ECO:0000269" key="4">
    <source>
    </source>
</evidence>
<evidence type="ECO:0000269" key="5">
    <source ref="6"/>
</evidence>
<evidence type="ECO:0000305" key="6"/>
<evidence type="ECO:0007829" key="7">
    <source>
        <dbReference type="PDB" id="8H1I"/>
    </source>
</evidence>
<dbReference type="EMBL" id="L28430">
    <property type="protein sequence ID" value="AAA23619.1"/>
    <property type="molecule type" value="Genomic_DNA"/>
</dbReference>
<dbReference type="EMBL" id="D28496">
    <property type="protein sequence ID" value="BAA05854.1"/>
    <property type="molecule type" value="Genomic_DNA"/>
</dbReference>
<dbReference type="EMBL" id="U00096">
    <property type="protein sequence ID" value="AAC74893.1"/>
    <property type="molecule type" value="Genomic_DNA"/>
</dbReference>
<dbReference type="EMBL" id="AP009048">
    <property type="protein sequence ID" value="BAA15634.1"/>
    <property type="molecule type" value="Genomic_DNA"/>
</dbReference>
<dbReference type="PIR" id="S43618">
    <property type="entry name" value="S43618"/>
</dbReference>
<dbReference type="RefSeq" id="NP_416337.1">
    <property type="nucleotide sequence ID" value="NC_000913.3"/>
</dbReference>
<dbReference type="PDB" id="8H1I">
    <property type="method" value="X-ray"/>
    <property type="resolution" value="2.10 A"/>
    <property type="chains" value="B=1-69"/>
</dbReference>
<dbReference type="PDB" id="8XYF">
    <property type="method" value="X-ray"/>
    <property type="resolution" value="1.67 A"/>
    <property type="chains" value="B=1-69"/>
</dbReference>
<dbReference type="PDBsum" id="8H1I"/>
<dbReference type="PDBsum" id="8XYF"/>
<dbReference type="SMR" id="P0A9Y6"/>
<dbReference type="BioGRID" id="4263536">
    <property type="interactions" value="469"/>
</dbReference>
<dbReference type="BioGRID" id="850696">
    <property type="interactions" value="1"/>
</dbReference>
<dbReference type="DIP" id="DIP-36183N"/>
<dbReference type="FunCoup" id="P0A9Y6">
    <property type="interactions" value="566"/>
</dbReference>
<dbReference type="IntAct" id="P0A9Y6">
    <property type="interactions" value="77"/>
</dbReference>
<dbReference type="STRING" id="511145.b1823"/>
<dbReference type="jPOST" id="P0A9Y6"/>
<dbReference type="PaxDb" id="511145-b1823"/>
<dbReference type="EnsemblBacteria" id="AAC74893">
    <property type="protein sequence ID" value="AAC74893"/>
    <property type="gene ID" value="b1823"/>
</dbReference>
<dbReference type="GeneID" id="946339"/>
<dbReference type="KEGG" id="ecj:JW1812"/>
<dbReference type="KEGG" id="eco:b1823"/>
<dbReference type="KEGG" id="ecoc:C3026_10385"/>
<dbReference type="PATRIC" id="fig|1411691.4.peg.428"/>
<dbReference type="EchoBASE" id="EB2120"/>
<dbReference type="eggNOG" id="COG1278">
    <property type="taxonomic scope" value="Bacteria"/>
</dbReference>
<dbReference type="HOGENOM" id="CLU_117621_2_1_6"/>
<dbReference type="InParanoid" id="P0A9Y6"/>
<dbReference type="OMA" id="EEIFVHV"/>
<dbReference type="OrthoDB" id="9810590at2"/>
<dbReference type="PhylomeDB" id="P0A9Y6"/>
<dbReference type="BioCyc" id="EcoCyc:EG12204-MONOMER"/>
<dbReference type="PRO" id="PR:P0A9Y6"/>
<dbReference type="Proteomes" id="UP000000625">
    <property type="component" value="Chromosome"/>
</dbReference>
<dbReference type="GO" id="GO:0005829">
    <property type="term" value="C:cytosol"/>
    <property type="evidence" value="ECO:0000314"/>
    <property type="project" value="EcoCyc"/>
</dbReference>
<dbReference type="GO" id="GO:0016020">
    <property type="term" value="C:membrane"/>
    <property type="evidence" value="ECO:0007005"/>
    <property type="project" value="UniProtKB"/>
</dbReference>
<dbReference type="GO" id="GO:0003676">
    <property type="term" value="F:nucleic acid binding"/>
    <property type="evidence" value="ECO:0000318"/>
    <property type="project" value="GO_Central"/>
</dbReference>
<dbReference type="GO" id="GO:0042803">
    <property type="term" value="F:protein homodimerization activity"/>
    <property type="evidence" value="ECO:0000314"/>
    <property type="project" value="EcoCyc"/>
</dbReference>
<dbReference type="GO" id="GO:0051087">
    <property type="term" value="F:protein-folding chaperone binding"/>
    <property type="evidence" value="ECO:0000314"/>
    <property type="project" value="CACAO"/>
</dbReference>
<dbReference type="GO" id="GO:0003723">
    <property type="term" value="F:RNA binding"/>
    <property type="evidence" value="ECO:0000314"/>
    <property type="project" value="EcoCyc"/>
</dbReference>
<dbReference type="GO" id="GO:0003697">
    <property type="term" value="F:single-stranded DNA binding"/>
    <property type="evidence" value="ECO:0000314"/>
    <property type="project" value="EcoCyc"/>
</dbReference>
<dbReference type="GO" id="GO:0001072">
    <property type="term" value="F:transcription antitermination factor activity, RNA binding"/>
    <property type="evidence" value="ECO:0000314"/>
    <property type="project" value="EcoCyc"/>
</dbReference>
<dbReference type="GO" id="GO:0034605">
    <property type="term" value="P:cellular response to heat"/>
    <property type="evidence" value="ECO:0000315"/>
    <property type="project" value="EcoCyc"/>
</dbReference>
<dbReference type="GO" id="GO:0060567">
    <property type="term" value="P:negative regulation of termination of DNA-templated transcription"/>
    <property type="evidence" value="ECO:0000314"/>
    <property type="project" value="EcoCyc"/>
</dbReference>
<dbReference type="GO" id="GO:0010468">
    <property type="term" value="P:regulation of gene expression"/>
    <property type="evidence" value="ECO:0000318"/>
    <property type="project" value="GO_Central"/>
</dbReference>
<dbReference type="CDD" id="cd04458">
    <property type="entry name" value="CSP_CDS"/>
    <property type="match status" value="1"/>
</dbReference>
<dbReference type="FunFam" id="2.40.50.140:FF:000006">
    <property type="entry name" value="Cold shock protein CspC"/>
    <property type="match status" value="1"/>
</dbReference>
<dbReference type="Gene3D" id="2.40.50.140">
    <property type="entry name" value="Nucleic acid-binding proteins"/>
    <property type="match status" value="1"/>
</dbReference>
<dbReference type="InterPro" id="IPR012156">
    <property type="entry name" value="Cold_shock_CspA"/>
</dbReference>
<dbReference type="InterPro" id="IPR050181">
    <property type="entry name" value="Cold_shock_domain"/>
</dbReference>
<dbReference type="InterPro" id="IPR011129">
    <property type="entry name" value="CSD"/>
</dbReference>
<dbReference type="InterPro" id="IPR019844">
    <property type="entry name" value="CSD_CS"/>
</dbReference>
<dbReference type="InterPro" id="IPR002059">
    <property type="entry name" value="CSP_DNA-bd"/>
</dbReference>
<dbReference type="InterPro" id="IPR012340">
    <property type="entry name" value="NA-bd_OB-fold"/>
</dbReference>
<dbReference type="NCBIfam" id="NF007062">
    <property type="entry name" value="PRK09507.1"/>
    <property type="match status" value="1"/>
</dbReference>
<dbReference type="NCBIfam" id="NF008190">
    <property type="entry name" value="PRK10943.1"/>
    <property type="match status" value="1"/>
</dbReference>
<dbReference type="PANTHER" id="PTHR11544">
    <property type="entry name" value="COLD SHOCK DOMAIN CONTAINING PROTEINS"/>
    <property type="match status" value="1"/>
</dbReference>
<dbReference type="Pfam" id="PF00313">
    <property type="entry name" value="CSD"/>
    <property type="match status" value="1"/>
</dbReference>
<dbReference type="PIRSF" id="PIRSF002599">
    <property type="entry name" value="Cold_shock_A"/>
    <property type="match status" value="1"/>
</dbReference>
<dbReference type="PRINTS" id="PR00050">
    <property type="entry name" value="COLDSHOCK"/>
</dbReference>
<dbReference type="SMART" id="SM00357">
    <property type="entry name" value="CSP"/>
    <property type="match status" value="1"/>
</dbReference>
<dbReference type="SUPFAM" id="SSF50249">
    <property type="entry name" value="Nucleic acid-binding proteins"/>
    <property type="match status" value="1"/>
</dbReference>
<dbReference type="PROSITE" id="PS00352">
    <property type="entry name" value="CSD_1"/>
    <property type="match status" value="1"/>
</dbReference>
<dbReference type="PROSITE" id="PS51857">
    <property type="entry name" value="CSD_2"/>
    <property type="match status" value="1"/>
</dbReference>
<feature type="initiator methionine" description="Removed" evidence="3 4 5">
    <location>
        <position position="1"/>
    </location>
</feature>
<feature type="chain" id="PRO_0000100241" description="Cold shock-like protein CspC">
    <location>
        <begin position="2"/>
        <end position="69"/>
    </location>
</feature>
<feature type="domain" description="CSD">
    <location>
        <begin position="6"/>
        <end position="66"/>
    </location>
</feature>
<feature type="sequence conflict" description="In Ref. 8; AA sequence." evidence="6" ref="8">
    <original>Q</original>
    <variation>T</variation>
    <location>
        <position position="7"/>
    </location>
</feature>
<feature type="strand" evidence="7">
    <location>
        <begin position="4"/>
        <end position="12"/>
    </location>
</feature>
<feature type="turn" evidence="7">
    <location>
        <begin position="13"/>
        <end position="16"/>
    </location>
</feature>
<feature type="strand" evidence="7">
    <location>
        <begin position="17"/>
        <end position="22"/>
    </location>
</feature>
<feature type="strand" evidence="7">
    <location>
        <begin position="29"/>
        <end position="32"/>
    </location>
</feature>
<feature type="helix" evidence="7">
    <location>
        <begin position="33"/>
        <end position="35"/>
    </location>
</feature>
<feature type="strand" evidence="7">
    <location>
        <begin position="49"/>
        <end position="57"/>
    </location>
</feature>
<feature type="strand" evidence="7">
    <location>
        <begin position="60"/>
        <end position="68"/>
    </location>
</feature>
<proteinExistence type="evidence at protein level"/>
<comment type="subcellular location">
    <subcellularLocation>
        <location evidence="1">Cytoplasm</location>
    </subcellularLocation>
</comment>
<comment type="mass spectrometry" mass="7273.0" method="Electrospray" evidence="2"/>
<sequence length="69" mass="7402">MAKIKGQVKWFNESKGFGFITPADGSKDVFVHFSAIQGNGFKTLAEGQNVEFEIQDGQKGPAAVNVTAI</sequence>
<organism>
    <name type="scientific">Escherichia coli (strain K12)</name>
    <dbReference type="NCBI Taxonomy" id="83333"/>
    <lineage>
        <taxon>Bacteria</taxon>
        <taxon>Pseudomonadati</taxon>
        <taxon>Pseudomonadota</taxon>
        <taxon>Gammaproteobacteria</taxon>
        <taxon>Enterobacterales</taxon>
        <taxon>Enterobacteriaceae</taxon>
        <taxon>Escherichia</taxon>
    </lineage>
</organism>
<keyword id="KW-0002">3D-structure</keyword>
<keyword id="KW-0010">Activator</keyword>
<keyword id="KW-0963">Cytoplasm</keyword>
<keyword id="KW-0903">Direct protein sequencing</keyword>
<keyword id="KW-0238">DNA-binding</keyword>
<keyword id="KW-1185">Reference proteome</keyword>
<keyword id="KW-0804">Transcription</keyword>
<keyword id="KW-0805">Transcription regulation</keyword>
<accession>P0A9Y6</accession>
<accession>O68636</accession>
<accession>P36996</accession>
<gene>
    <name type="primary">cspC</name>
    <name type="synonym">msmB</name>
    <name type="ordered locus">b1823</name>
    <name type="ordered locus">JW1812</name>
</gene>
<protein>
    <recommendedName>
        <fullName>Cold shock-like protein CspC</fullName>
        <shortName>CSP-C</shortName>
    </recommendedName>
</protein>
<name>CSPC_ECOLI</name>